<name>RL18A_SCHPO</name>
<organism>
    <name type="scientific">Schizosaccharomyces pombe (strain 972 / ATCC 24843)</name>
    <name type="common">Fission yeast</name>
    <dbReference type="NCBI Taxonomy" id="284812"/>
    <lineage>
        <taxon>Eukaryota</taxon>
        <taxon>Fungi</taxon>
        <taxon>Dikarya</taxon>
        <taxon>Ascomycota</taxon>
        <taxon>Taphrinomycotina</taxon>
        <taxon>Schizosaccharomycetes</taxon>
        <taxon>Schizosaccharomycetales</taxon>
        <taxon>Schizosaccharomycetaceae</taxon>
        <taxon>Schizosaccharomyces</taxon>
    </lineage>
</organism>
<keyword id="KW-0002">3D-structure</keyword>
<keyword id="KW-0963">Cytoplasm</keyword>
<keyword id="KW-0597">Phosphoprotein</keyword>
<keyword id="KW-1185">Reference proteome</keyword>
<keyword id="KW-0687">Ribonucleoprotein</keyword>
<keyword id="KW-0689">Ribosomal protein</keyword>
<proteinExistence type="evidence at protein level"/>
<sequence length="187" mass="21190">MGIDIERHHVKKSQRSKPASENVYLKLLVKLYRFLARRTDSRFNKAILKRLFQSKTNRPPISISKIAALTSRKSASSQNKTTVVVGTVTDDERMLTVPKLSIAALRFTKSARARILKAGGEVLTLDQLALRAPTGSNTVLVRGKKHAREAYRHFGFGPHKHKAPYVRSEGRKFERARGRRKSRAFKV</sequence>
<protein>
    <recommendedName>
        <fullName evidence="4">Large ribosomal subunit protein eL18A</fullName>
    </recommendedName>
    <alternativeName>
        <fullName>60S ribosomal protein L18-A</fullName>
    </alternativeName>
</protein>
<dbReference type="EMBL" id="CU329671">
    <property type="protein sequence ID" value="CAA20689.1"/>
    <property type="molecule type" value="Genomic_DNA"/>
</dbReference>
<dbReference type="PIR" id="T39323">
    <property type="entry name" value="S67377"/>
</dbReference>
<dbReference type="RefSeq" id="NP_596397.1">
    <property type="nucleotide sequence ID" value="NM_001022317.2"/>
</dbReference>
<dbReference type="PDB" id="8ESQ">
    <property type="method" value="EM"/>
    <property type="resolution" value="2.80 A"/>
    <property type="chains" value="Q=1-187"/>
</dbReference>
<dbReference type="PDB" id="8ESR">
    <property type="method" value="EM"/>
    <property type="resolution" value="3.20 A"/>
    <property type="chains" value="Q=1-187"/>
</dbReference>
<dbReference type="PDB" id="8ETC">
    <property type="method" value="EM"/>
    <property type="resolution" value="3.10 A"/>
    <property type="chains" value="Q=1-187"/>
</dbReference>
<dbReference type="PDB" id="8ETG">
    <property type="method" value="EM"/>
    <property type="resolution" value="3.40 A"/>
    <property type="chains" value="Q=1-187"/>
</dbReference>
<dbReference type="PDB" id="8ETH">
    <property type="method" value="EM"/>
    <property type="resolution" value="3.80 A"/>
    <property type="chains" value="Q=1-187"/>
</dbReference>
<dbReference type="PDB" id="8ETI">
    <property type="method" value="EM"/>
    <property type="resolution" value="3.70 A"/>
    <property type="chains" value="Q=1-187"/>
</dbReference>
<dbReference type="PDB" id="8ETJ">
    <property type="method" value="EM"/>
    <property type="resolution" value="3.20 A"/>
    <property type="chains" value="Q=1-187"/>
</dbReference>
<dbReference type="PDB" id="8EUG">
    <property type="method" value="EM"/>
    <property type="resolution" value="2.80 A"/>
    <property type="chains" value="Q=1-187"/>
</dbReference>
<dbReference type="PDB" id="8EUI">
    <property type="method" value="EM"/>
    <property type="resolution" value="3.10 A"/>
    <property type="chains" value="Q=1-187"/>
</dbReference>
<dbReference type="PDB" id="8EUP">
    <property type="method" value="EM"/>
    <property type="resolution" value="3.10 A"/>
    <property type="chains" value="Q=1-187"/>
</dbReference>
<dbReference type="PDB" id="8EUY">
    <property type="method" value="EM"/>
    <property type="resolution" value="3.00 A"/>
    <property type="chains" value="Q=1-187"/>
</dbReference>
<dbReference type="PDB" id="8EV3">
    <property type="method" value="EM"/>
    <property type="resolution" value="3.00 A"/>
    <property type="chains" value="Q=1-187"/>
</dbReference>
<dbReference type="PDBsum" id="8ESQ"/>
<dbReference type="PDBsum" id="8ESR"/>
<dbReference type="PDBsum" id="8ETC"/>
<dbReference type="PDBsum" id="8ETG"/>
<dbReference type="PDBsum" id="8ETH"/>
<dbReference type="PDBsum" id="8ETI"/>
<dbReference type="PDBsum" id="8ETJ"/>
<dbReference type="PDBsum" id="8EUG"/>
<dbReference type="PDBsum" id="8EUI"/>
<dbReference type="PDBsum" id="8EUP"/>
<dbReference type="PDBsum" id="8EUY"/>
<dbReference type="PDBsum" id="8EV3"/>
<dbReference type="SMR" id="Q10192"/>
<dbReference type="BioGRID" id="276233">
    <property type="interactions" value="13"/>
</dbReference>
<dbReference type="FunCoup" id="Q10192">
    <property type="interactions" value="558"/>
</dbReference>
<dbReference type="IntAct" id="Q10192">
    <property type="interactions" value="3"/>
</dbReference>
<dbReference type="MINT" id="Q10192"/>
<dbReference type="STRING" id="284812.Q10192"/>
<dbReference type="iPTMnet" id="Q10192"/>
<dbReference type="PaxDb" id="4896-SPBC11C11.07.1"/>
<dbReference type="EnsemblFungi" id="SPBC11C11.07.1">
    <property type="protein sequence ID" value="SPBC11C11.07.1:pep"/>
    <property type="gene ID" value="SPBC11C11.07"/>
</dbReference>
<dbReference type="GeneID" id="2539678"/>
<dbReference type="KEGG" id="spo:2539678"/>
<dbReference type="PomBase" id="SPBC11C11.07">
    <property type="gene designation" value="rpl1801"/>
</dbReference>
<dbReference type="VEuPathDB" id="FungiDB:SPBC11C11.07"/>
<dbReference type="eggNOG" id="KOG1714">
    <property type="taxonomic scope" value="Eukaryota"/>
</dbReference>
<dbReference type="HOGENOM" id="CLU_080024_0_1_1"/>
<dbReference type="InParanoid" id="Q10192"/>
<dbReference type="OMA" id="MSKANRP"/>
<dbReference type="PhylomeDB" id="Q10192"/>
<dbReference type="Reactome" id="R-SPO-156827">
    <property type="pathway name" value="L13a-mediated translational silencing of Ceruloplasmin expression"/>
</dbReference>
<dbReference type="Reactome" id="R-SPO-1799339">
    <property type="pathway name" value="SRP-dependent cotranslational protein targeting to membrane"/>
</dbReference>
<dbReference type="Reactome" id="R-SPO-72689">
    <property type="pathway name" value="Formation of a pool of free 40S subunits"/>
</dbReference>
<dbReference type="Reactome" id="R-SPO-72706">
    <property type="pathway name" value="GTP hydrolysis and joining of the 60S ribosomal subunit"/>
</dbReference>
<dbReference type="Reactome" id="R-SPO-975956">
    <property type="pathway name" value="Nonsense Mediated Decay (NMD) independent of the Exon Junction Complex (EJC)"/>
</dbReference>
<dbReference type="Reactome" id="R-SPO-975957">
    <property type="pathway name" value="Nonsense Mediated Decay (NMD) enhanced by the Exon Junction Complex (EJC)"/>
</dbReference>
<dbReference type="PRO" id="PR:Q10192"/>
<dbReference type="Proteomes" id="UP000002485">
    <property type="component" value="Chromosome II"/>
</dbReference>
<dbReference type="GO" id="GO:0005829">
    <property type="term" value="C:cytosol"/>
    <property type="evidence" value="ECO:0007005"/>
    <property type="project" value="PomBase"/>
</dbReference>
<dbReference type="GO" id="GO:0022625">
    <property type="term" value="C:cytosolic large ribosomal subunit"/>
    <property type="evidence" value="ECO:0000318"/>
    <property type="project" value="GO_Central"/>
</dbReference>
<dbReference type="GO" id="GO:0030684">
    <property type="term" value="C:preribosome"/>
    <property type="evidence" value="ECO:0000314"/>
    <property type="project" value="PomBase"/>
</dbReference>
<dbReference type="GO" id="GO:0003723">
    <property type="term" value="F:RNA binding"/>
    <property type="evidence" value="ECO:0000318"/>
    <property type="project" value="GO_Central"/>
</dbReference>
<dbReference type="GO" id="GO:0003735">
    <property type="term" value="F:structural constituent of ribosome"/>
    <property type="evidence" value="ECO:0000318"/>
    <property type="project" value="GO_Central"/>
</dbReference>
<dbReference type="GO" id="GO:0002181">
    <property type="term" value="P:cytoplasmic translation"/>
    <property type="evidence" value="ECO:0000266"/>
    <property type="project" value="PomBase"/>
</dbReference>
<dbReference type="FunFam" id="3.100.10.10:FF:000001">
    <property type="entry name" value="60S ribosomal protein L18"/>
    <property type="match status" value="1"/>
</dbReference>
<dbReference type="Gene3D" id="3.100.10.10">
    <property type="match status" value="1"/>
</dbReference>
<dbReference type="InterPro" id="IPR000039">
    <property type="entry name" value="Ribosomal_eL18"/>
</dbReference>
<dbReference type="InterPro" id="IPR021132">
    <property type="entry name" value="Ribosomal_eL18/eL18-A/B/_CS"/>
</dbReference>
<dbReference type="InterPro" id="IPR021131">
    <property type="entry name" value="Ribosomal_uL15/eL18"/>
</dbReference>
<dbReference type="InterPro" id="IPR036227">
    <property type="entry name" value="Ribosomal_uL15/eL18_sf"/>
</dbReference>
<dbReference type="PANTHER" id="PTHR10934">
    <property type="entry name" value="60S RIBOSOMAL PROTEIN L18"/>
    <property type="match status" value="1"/>
</dbReference>
<dbReference type="PANTHER" id="PTHR10934:SF2">
    <property type="entry name" value="LARGE RIBOSOMAL SUBUNIT PROTEIN EL18"/>
    <property type="match status" value="1"/>
</dbReference>
<dbReference type="Pfam" id="PF17135">
    <property type="entry name" value="Ribosomal_L18"/>
    <property type="match status" value="1"/>
</dbReference>
<dbReference type="SUPFAM" id="SSF52080">
    <property type="entry name" value="Ribosomal proteins L15p and L18e"/>
    <property type="match status" value="1"/>
</dbReference>
<dbReference type="PROSITE" id="PS01106">
    <property type="entry name" value="RIBOSOMAL_L18E"/>
    <property type="match status" value="1"/>
</dbReference>
<feature type="chain" id="PRO_0000132782" description="Large ribosomal subunit protein eL18A">
    <location>
        <begin position="1"/>
        <end position="187"/>
    </location>
</feature>
<feature type="modified residue" description="Phosphoserine" evidence="3">
    <location>
        <position position="16"/>
    </location>
</feature>
<feature type="modified residue" description="Phosphoserine" evidence="3">
    <location>
        <position position="64"/>
    </location>
</feature>
<feature type="modified residue" description="Phosphothreonine" evidence="3">
    <location>
        <position position="87"/>
    </location>
</feature>
<feature type="modified residue" description="Phosphothreonine" evidence="3">
    <location>
        <position position="89"/>
    </location>
</feature>
<feature type="modified residue" description="Phosphothreonine" evidence="3">
    <location>
        <position position="134"/>
    </location>
</feature>
<feature type="modified residue" description="Phosphoserine" evidence="3">
    <location>
        <position position="136"/>
    </location>
</feature>
<feature type="modified residue" description="Phosphothreonine" evidence="3">
    <location>
        <position position="138"/>
    </location>
</feature>
<feature type="strand" evidence="7">
    <location>
        <begin position="15"/>
        <end position="17"/>
    </location>
</feature>
<feature type="helix" evidence="6">
    <location>
        <begin position="23"/>
        <end position="38"/>
    </location>
</feature>
<feature type="helix" evidence="6">
    <location>
        <begin position="42"/>
        <end position="51"/>
    </location>
</feature>
<feature type="helix" evidence="5">
    <location>
        <begin position="55"/>
        <end position="57"/>
    </location>
</feature>
<feature type="helix" evidence="6">
    <location>
        <begin position="63"/>
        <end position="70"/>
    </location>
</feature>
<feature type="strand" evidence="6">
    <location>
        <begin position="81"/>
        <end position="89"/>
    </location>
</feature>
<feature type="strand" evidence="6">
    <location>
        <begin position="101"/>
        <end position="107"/>
    </location>
</feature>
<feature type="helix" evidence="6">
    <location>
        <begin position="109"/>
        <end position="117"/>
    </location>
</feature>
<feature type="strand" evidence="6">
    <location>
        <begin position="121"/>
        <end position="123"/>
    </location>
</feature>
<feature type="helix" evidence="6">
    <location>
        <begin position="125"/>
        <end position="131"/>
    </location>
</feature>
<feature type="strand" evidence="6">
    <location>
        <begin position="138"/>
        <end position="140"/>
    </location>
</feature>
<evidence type="ECO:0000250" key="1">
    <source>
        <dbReference type="UniProtKB" id="P0CX49"/>
    </source>
</evidence>
<evidence type="ECO:0000269" key="2">
    <source>
    </source>
</evidence>
<evidence type="ECO:0000269" key="3">
    <source>
    </source>
</evidence>
<evidence type="ECO:0000305" key="4"/>
<evidence type="ECO:0007829" key="5">
    <source>
        <dbReference type="PDB" id="8ETC"/>
    </source>
</evidence>
<evidence type="ECO:0007829" key="6">
    <source>
        <dbReference type="PDB" id="8EUY"/>
    </source>
</evidence>
<evidence type="ECO:0007829" key="7">
    <source>
        <dbReference type="PDB" id="8EV3"/>
    </source>
</evidence>
<accession>Q10192</accession>
<gene>
    <name type="primary">rpl1801</name>
    <name type="synonym">rpl18</name>
    <name type="synonym">rpl18a</name>
    <name type="ORF">SPBC11C11.07</name>
</gene>
<reference key="1">
    <citation type="journal article" date="2002" name="Nature">
        <title>The genome sequence of Schizosaccharomyces pombe.</title>
        <authorList>
            <person name="Wood V."/>
            <person name="Gwilliam R."/>
            <person name="Rajandream M.A."/>
            <person name="Lyne M.H."/>
            <person name="Lyne R."/>
            <person name="Stewart A."/>
            <person name="Sgouros J.G."/>
            <person name="Peat N."/>
            <person name="Hayles J."/>
            <person name="Baker S.G."/>
            <person name="Basham D."/>
            <person name="Bowman S."/>
            <person name="Brooks K."/>
            <person name="Brown D."/>
            <person name="Brown S."/>
            <person name="Chillingworth T."/>
            <person name="Churcher C.M."/>
            <person name="Collins M."/>
            <person name="Connor R."/>
            <person name="Cronin A."/>
            <person name="Davis P."/>
            <person name="Feltwell T."/>
            <person name="Fraser A."/>
            <person name="Gentles S."/>
            <person name="Goble A."/>
            <person name="Hamlin N."/>
            <person name="Harris D.E."/>
            <person name="Hidalgo J."/>
            <person name="Hodgson G."/>
            <person name="Holroyd S."/>
            <person name="Hornsby T."/>
            <person name="Howarth S."/>
            <person name="Huckle E.J."/>
            <person name="Hunt S."/>
            <person name="Jagels K."/>
            <person name="James K.D."/>
            <person name="Jones L."/>
            <person name="Jones M."/>
            <person name="Leather S."/>
            <person name="McDonald S."/>
            <person name="McLean J."/>
            <person name="Mooney P."/>
            <person name="Moule S."/>
            <person name="Mungall K.L."/>
            <person name="Murphy L.D."/>
            <person name="Niblett D."/>
            <person name="Odell C."/>
            <person name="Oliver K."/>
            <person name="O'Neil S."/>
            <person name="Pearson D."/>
            <person name="Quail M.A."/>
            <person name="Rabbinowitsch E."/>
            <person name="Rutherford K.M."/>
            <person name="Rutter S."/>
            <person name="Saunders D."/>
            <person name="Seeger K."/>
            <person name="Sharp S."/>
            <person name="Skelton J."/>
            <person name="Simmonds M.N."/>
            <person name="Squares R."/>
            <person name="Squares S."/>
            <person name="Stevens K."/>
            <person name="Taylor K."/>
            <person name="Taylor R.G."/>
            <person name="Tivey A."/>
            <person name="Walsh S.V."/>
            <person name="Warren T."/>
            <person name="Whitehead S."/>
            <person name="Woodward J.R."/>
            <person name="Volckaert G."/>
            <person name="Aert R."/>
            <person name="Robben J."/>
            <person name="Grymonprez B."/>
            <person name="Weltjens I."/>
            <person name="Vanstreels E."/>
            <person name="Rieger M."/>
            <person name="Schaefer M."/>
            <person name="Mueller-Auer S."/>
            <person name="Gabel C."/>
            <person name="Fuchs M."/>
            <person name="Duesterhoeft A."/>
            <person name="Fritzc C."/>
            <person name="Holzer E."/>
            <person name="Moestl D."/>
            <person name="Hilbert H."/>
            <person name="Borzym K."/>
            <person name="Langer I."/>
            <person name="Beck A."/>
            <person name="Lehrach H."/>
            <person name="Reinhardt R."/>
            <person name="Pohl T.M."/>
            <person name="Eger P."/>
            <person name="Zimmermann W."/>
            <person name="Wedler H."/>
            <person name="Wambutt R."/>
            <person name="Purnelle B."/>
            <person name="Goffeau A."/>
            <person name="Cadieu E."/>
            <person name="Dreano S."/>
            <person name="Gloux S."/>
            <person name="Lelaure V."/>
            <person name="Mottier S."/>
            <person name="Galibert F."/>
            <person name="Aves S.J."/>
            <person name="Xiang Z."/>
            <person name="Hunt C."/>
            <person name="Moore K."/>
            <person name="Hurst S.M."/>
            <person name="Lucas M."/>
            <person name="Rochet M."/>
            <person name="Gaillardin C."/>
            <person name="Tallada V.A."/>
            <person name="Garzon A."/>
            <person name="Thode G."/>
            <person name="Daga R.R."/>
            <person name="Cruzado L."/>
            <person name="Jimenez J."/>
            <person name="Sanchez M."/>
            <person name="del Rey F."/>
            <person name="Benito J."/>
            <person name="Dominguez A."/>
            <person name="Revuelta J.L."/>
            <person name="Moreno S."/>
            <person name="Armstrong J."/>
            <person name="Forsburg S.L."/>
            <person name="Cerutti L."/>
            <person name="Lowe T."/>
            <person name="McCombie W.R."/>
            <person name="Paulsen I."/>
            <person name="Potashkin J."/>
            <person name="Shpakovski G.V."/>
            <person name="Ussery D."/>
            <person name="Barrell B.G."/>
            <person name="Nurse P."/>
        </authorList>
    </citation>
    <scope>NUCLEOTIDE SEQUENCE [LARGE SCALE GENOMIC DNA]</scope>
    <source>
        <strain>972 / ATCC 24843</strain>
    </source>
</reference>
<reference key="2">
    <citation type="journal article" date="2006" name="Nat. Biotechnol.">
        <title>ORFeome cloning and global analysis of protein localization in the fission yeast Schizosaccharomyces pombe.</title>
        <authorList>
            <person name="Matsuyama A."/>
            <person name="Arai R."/>
            <person name="Yashiroda Y."/>
            <person name="Shirai A."/>
            <person name="Kamata A."/>
            <person name="Sekido S."/>
            <person name="Kobayashi Y."/>
            <person name="Hashimoto A."/>
            <person name="Hamamoto M."/>
            <person name="Hiraoka Y."/>
            <person name="Horinouchi S."/>
            <person name="Yoshida M."/>
        </authorList>
    </citation>
    <scope>SUBCELLULAR LOCATION [LARGE SCALE ANALYSIS]</scope>
</reference>
<reference key="3">
    <citation type="journal article" date="2008" name="J. Proteome Res.">
        <title>Phosphoproteome analysis of fission yeast.</title>
        <authorList>
            <person name="Wilson-Grady J.T."/>
            <person name="Villen J."/>
            <person name="Gygi S.P."/>
        </authorList>
    </citation>
    <scope>PHOSPHORYLATION [LARGE SCALE ANALYSIS] AT SER-16; SER-64; THR-87; THR-89; THR-134; SER-136 AND THR-138</scope>
    <scope>IDENTIFICATION BY MASS SPECTROMETRY</scope>
</reference>
<comment type="function">
    <text evidence="1">Component of the ribosome, a large ribonucleoprotein complex responsible for the synthesis of proteins in the cell. The small ribosomal subunit (SSU) binds messenger RNAs (mRNAs) and translates the encoded message by selecting cognate aminoacyl-transfer RNA (tRNA) molecules. The large subunit (LSU) contains the ribosomal catalytic site termed the peptidyl transferase center (PTC), which catalyzes the formation of peptide bonds, thereby polymerizing the amino acids delivered by tRNAs into a polypeptide chain. The nascent polypeptides leave the ribosome through a tunnel in the LSU and interact with protein factors that function in enzymatic processing, targeting, and the membrane insertion of nascent chains at the exit of the ribosomal tunnel.</text>
</comment>
<comment type="subunit">
    <text evidence="1">Component of the large ribosomal subunit (LSU). Mature yeast ribosomes consist of a small (40S) and a large (60S) subunit. The 40S small subunit contains 1 molecule of ribosomal RNA (18S rRNA) and at least 33 different proteins. The large 60S subunit contains 3 rRNA molecules (25S, 5.8S and 5S rRNA) and at least 46 different proteins. eL18 interacts with NAP1.</text>
</comment>
<comment type="subcellular location">
    <subcellularLocation>
        <location evidence="2">Cytoplasm</location>
    </subcellularLocation>
</comment>
<comment type="miscellaneous">
    <text>There are 2 genes for eL18 in S.pombe.</text>
</comment>
<comment type="similarity">
    <text evidence="4">Belongs to the eukaryotic ribosomal protein eL18 family.</text>
</comment>